<comment type="function">
    <text evidence="1">May be involved in microtubule organization and stabilization.</text>
</comment>
<comment type="subunit">
    <text evidence="1">Oligomerization is required for binding to microtubules.</text>
</comment>
<comment type="subcellular location">
    <subcellularLocation>
        <location evidence="1">Cytoplasm</location>
        <location evidence="1">Cytoskeleton</location>
        <location evidence="1">Microtubule organizing center</location>
        <location evidence="1">Centrosome</location>
    </subcellularLocation>
    <subcellularLocation>
        <location evidence="1">Nucleus</location>
    </subcellularLocation>
    <subcellularLocation>
        <location evidence="1">Cytoplasm</location>
    </subcellularLocation>
    <subcellularLocation>
        <location evidence="1">Cleavage furrow</location>
    </subcellularLocation>
    <text evidence="1">Cell-cycle-dependent association with the centrosome. Colocalizes with a subpopulation of microtubules. Does not associate with microtubules during mitosis but reassociates with microtubules during cytokinesis. Localizes to the central portions of a small subset of microtubules in interphase cells and a subpopulation of microtubules in the cleavage furrow, not present in the mitotic spindle (By similarity).</text>
</comment>
<comment type="alternative products">
    <event type="alternative splicing"/>
    <isoform>
        <id>Q4R539-1</id>
        <name>1</name>
        <sequence type="displayed"/>
    </isoform>
    <isoform>
        <id>Q4R539-2</id>
        <name>2</name>
        <sequence type="described" ref="VSP_030765 VSP_030766"/>
    </isoform>
</comment>
<comment type="domain">
    <text>B30.2 box contains a microtubule-binding site.</text>
</comment>
<comment type="sequence caution" evidence="10">
    <conflict type="frameshift">
        <sequence resource="EMBL-CDS" id="BAE01786"/>
    </conflict>
</comment>
<name>FSD1_MACFA</name>
<reference key="1">
    <citation type="submission" date="2001-02" db="EMBL/GenBank/DDBJ databases">
        <title>Isolation of full-length cDNA clones from macaque brain cDNA libraries.</title>
        <authorList>
            <person name="Osada N."/>
            <person name="Hida M."/>
            <person name="Kusuda J."/>
            <person name="Tanuma R."/>
            <person name="Iseki K."/>
            <person name="Hirai M."/>
            <person name="Terao K."/>
            <person name="Suzuki Y."/>
            <person name="Sugano S."/>
            <person name="Hashimoto K."/>
        </authorList>
    </citation>
    <scope>NUCLEOTIDE SEQUENCE [LARGE SCALE MRNA] (ISOFORM 2)</scope>
    <source>
        <tissue>Frontal cortex</tissue>
    </source>
</reference>
<reference key="2">
    <citation type="submission" date="2005-06" db="EMBL/GenBank/DDBJ databases">
        <title>DNA sequences of macaque genes expressed in brain or testis and its evolutionary implications.</title>
        <authorList>
            <consortium name="International consortium for macaque cDNA sequencing and analysis"/>
        </authorList>
    </citation>
    <scope>NUCLEOTIDE SEQUENCE [LARGE SCALE MRNA] (ISOFORM 1)</scope>
    <source>
        <tissue>Brain cortex</tissue>
    </source>
</reference>
<dbReference type="EMBL" id="AB056406">
    <property type="protein sequence ID" value="BAB33064.1"/>
    <property type="molecule type" value="mRNA"/>
</dbReference>
<dbReference type="EMBL" id="AB169705">
    <property type="protein sequence ID" value="BAE01786.1"/>
    <property type="status" value="ALT_FRAME"/>
    <property type="molecule type" value="mRNA"/>
</dbReference>
<dbReference type="RefSeq" id="NP_001271730.1">
    <property type="nucleotide sequence ID" value="NM_001284801.1"/>
</dbReference>
<dbReference type="RefSeq" id="XP_045236409.1">
    <molecule id="Q4R539-1"/>
    <property type="nucleotide sequence ID" value="XM_045380474.2"/>
</dbReference>
<dbReference type="STRING" id="9541.ENSMFAP00000029431"/>
<dbReference type="GeneID" id="101865139"/>
<dbReference type="eggNOG" id="KOG2177">
    <property type="taxonomic scope" value="Eukaryota"/>
</dbReference>
<dbReference type="Proteomes" id="UP000233100">
    <property type="component" value="Unplaced"/>
</dbReference>
<dbReference type="GO" id="GO:0005813">
    <property type="term" value="C:centrosome"/>
    <property type="evidence" value="ECO:0007669"/>
    <property type="project" value="UniProtKB-SubCell"/>
</dbReference>
<dbReference type="GO" id="GO:0032154">
    <property type="term" value="C:cleavage furrow"/>
    <property type="evidence" value="ECO:0007669"/>
    <property type="project" value="UniProtKB-SubCell"/>
</dbReference>
<dbReference type="GO" id="GO:0005737">
    <property type="term" value="C:cytoplasm"/>
    <property type="evidence" value="ECO:0007669"/>
    <property type="project" value="UniProtKB-SubCell"/>
</dbReference>
<dbReference type="GO" id="GO:0005874">
    <property type="term" value="C:microtubule"/>
    <property type="evidence" value="ECO:0007669"/>
    <property type="project" value="UniProtKB-KW"/>
</dbReference>
<dbReference type="GO" id="GO:0005634">
    <property type="term" value="C:nucleus"/>
    <property type="evidence" value="ECO:0007669"/>
    <property type="project" value="UniProtKB-SubCell"/>
</dbReference>
<dbReference type="GO" id="GO:0008017">
    <property type="term" value="F:microtubule binding"/>
    <property type="evidence" value="ECO:0007669"/>
    <property type="project" value="TreeGrafter"/>
</dbReference>
<dbReference type="GO" id="GO:0051301">
    <property type="term" value="P:cell division"/>
    <property type="evidence" value="ECO:0007669"/>
    <property type="project" value="UniProtKB-KW"/>
</dbReference>
<dbReference type="GO" id="GO:0051302">
    <property type="term" value="P:regulation of cell division"/>
    <property type="evidence" value="ECO:0007669"/>
    <property type="project" value="TreeGrafter"/>
</dbReference>
<dbReference type="GO" id="GO:0060236">
    <property type="term" value="P:regulation of mitotic spindle organization"/>
    <property type="evidence" value="ECO:0007669"/>
    <property type="project" value="TreeGrafter"/>
</dbReference>
<dbReference type="CDD" id="cd00063">
    <property type="entry name" value="FN3"/>
    <property type="match status" value="1"/>
</dbReference>
<dbReference type="CDD" id="cd12901">
    <property type="entry name" value="SPRY_PRY_FSD1"/>
    <property type="match status" value="1"/>
</dbReference>
<dbReference type="FunFam" id="2.60.120.920:FF:000034">
    <property type="entry name" value="Fibronectin type III and SPRY domain-containing protein 1"/>
    <property type="match status" value="1"/>
</dbReference>
<dbReference type="FunFam" id="1.20.5.170:FF:000064">
    <property type="entry name" value="fibronectin type III and SPRY domain-containing protein 1"/>
    <property type="match status" value="1"/>
</dbReference>
<dbReference type="FunFam" id="2.60.40.10:FF:000566">
    <property type="entry name" value="fibronectin type III and SPRY domain-containing protein 1"/>
    <property type="match status" value="1"/>
</dbReference>
<dbReference type="Gene3D" id="1.20.5.170">
    <property type="match status" value="1"/>
</dbReference>
<dbReference type="Gene3D" id="2.60.120.920">
    <property type="match status" value="1"/>
</dbReference>
<dbReference type="Gene3D" id="2.60.40.10">
    <property type="entry name" value="Immunoglobulins"/>
    <property type="match status" value="1"/>
</dbReference>
<dbReference type="InterPro" id="IPR001870">
    <property type="entry name" value="B30.2/SPRY"/>
</dbReference>
<dbReference type="InterPro" id="IPR043136">
    <property type="entry name" value="B30.2/SPRY_sf"/>
</dbReference>
<dbReference type="InterPro" id="IPR003649">
    <property type="entry name" value="Bbox_C"/>
</dbReference>
<dbReference type="InterPro" id="IPR013320">
    <property type="entry name" value="ConA-like_dom_sf"/>
</dbReference>
<dbReference type="InterPro" id="IPR017903">
    <property type="entry name" value="COS_domain"/>
</dbReference>
<dbReference type="InterPro" id="IPR050617">
    <property type="entry name" value="E3_ligase_FN3/SPRY"/>
</dbReference>
<dbReference type="InterPro" id="IPR003961">
    <property type="entry name" value="FN3_dom"/>
</dbReference>
<dbReference type="InterPro" id="IPR036116">
    <property type="entry name" value="FN3_sf"/>
</dbReference>
<dbReference type="InterPro" id="IPR013783">
    <property type="entry name" value="Ig-like_fold"/>
</dbReference>
<dbReference type="InterPro" id="IPR035742">
    <property type="entry name" value="SPRY/PRY_FSD1"/>
</dbReference>
<dbReference type="InterPro" id="IPR003877">
    <property type="entry name" value="SPRY_dom"/>
</dbReference>
<dbReference type="PANTHER" id="PTHR24099">
    <property type="entry name" value="E3 UBIQUITIN-PROTEIN LIGASE TRIM36-RELATED"/>
    <property type="match status" value="1"/>
</dbReference>
<dbReference type="PANTHER" id="PTHR24099:SF4">
    <property type="entry name" value="FIBRONECTIN TYPE III AND SPRY DOMAIN-CONTAINING PROTEIN 1"/>
    <property type="match status" value="1"/>
</dbReference>
<dbReference type="Pfam" id="PF00041">
    <property type="entry name" value="fn3"/>
    <property type="match status" value="1"/>
</dbReference>
<dbReference type="Pfam" id="PF00622">
    <property type="entry name" value="SPRY"/>
    <property type="match status" value="1"/>
</dbReference>
<dbReference type="SMART" id="SM00502">
    <property type="entry name" value="BBC"/>
    <property type="match status" value="1"/>
</dbReference>
<dbReference type="SMART" id="SM00060">
    <property type="entry name" value="FN3"/>
    <property type="match status" value="1"/>
</dbReference>
<dbReference type="SMART" id="SM00449">
    <property type="entry name" value="SPRY"/>
    <property type="match status" value="1"/>
</dbReference>
<dbReference type="SUPFAM" id="SSF49899">
    <property type="entry name" value="Concanavalin A-like lectins/glucanases"/>
    <property type="match status" value="1"/>
</dbReference>
<dbReference type="SUPFAM" id="SSF49265">
    <property type="entry name" value="Fibronectin type III"/>
    <property type="match status" value="1"/>
</dbReference>
<dbReference type="PROSITE" id="PS50188">
    <property type="entry name" value="B302_SPRY"/>
    <property type="match status" value="1"/>
</dbReference>
<dbReference type="PROSITE" id="PS51262">
    <property type="entry name" value="COS"/>
    <property type="match status" value="1"/>
</dbReference>
<dbReference type="PROSITE" id="PS50853">
    <property type="entry name" value="FN3"/>
    <property type="match status" value="1"/>
</dbReference>
<accession>Q4R539</accession>
<accession>Q9BGR6</accession>
<feature type="chain" id="PRO_0000316538" description="Fibronectin type III and SPRY domain-containing protein 1">
    <location>
        <begin position="1"/>
        <end position="496"/>
    </location>
</feature>
<feature type="domain" description="COS" evidence="7">
    <location>
        <begin position="105"/>
        <end position="162"/>
    </location>
</feature>
<feature type="domain" description="Fibronectin type-III" evidence="5">
    <location>
        <begin position="164"/>
        <end position="268"/>
    </location>
</feature>
<feature type="domain" description="B30.2/SPRY" evidence="6">
    <location>
        <begin position="268"/>
        <end position="477"/>
    </location>
</feature>
<feature type="region of interest" description="Disordered" evidence="8">
    <location>
        <begin position="301"/>
        <end position="336"/>
    </location>
</feature>
<feature type="coiled-coil region" evidence="4">
    <location>
        <begin position="4"/>
        <end position="99"/>
    </location>
</feature>
<feature type="modified residue" description="Omega-N-methylarginine" evidence="2">
    <location>
        <position position="310"/>
    </location>
</feature>
<feature type="modified residue" description="Omega-N-methylarginine" evidence="3">
    <location>
        <position position="320"/>
    </location>
</feature>
<feature type="splice variant" id="VSP_030765" description="In isoform 2." evidence="9">
    <location>
        <begin position="1"/>
        <end position="292"/>
    </location>
</feature>
<feature type="splice variant" id="VSP_030766" description="In isoform 2." evidence="9">
    <original>LLSFYNARTKQVLHTFKTRFTQPLLPAFTVWCGSFQVTTGLQVPSSVRCLQKRGSATSSSNTSLT</original>
    <variation>DPKPQLPSLAAP</variation>
    <location>
        <begin position="432"/>
        <end position="496"/>
    </location>
</feature>
<feature type="sequence conflict" description="In Ref. 1; BAB33064." evidence="10" ref="1">
    <original>T</original>
    <variation>A</variation>
    <location>
        <position position="387"/>
    </location>
</feature>
<keyword id="KW-0025">Alternative splicing</keyword>
<keyword id="KW-0131">Cell cycle</keyword>
<keyword id="KW-0132">Cell division</keyword>
<keyword id="KW-0175">Coiled coil</keyword>
<keyword id="KW-0963">Cytoplasm</keyword>
<keyword id="KW-0206">Cytoskeleton</keyword>
<keyword id="KW-0488">Methylation</keyword>
<keyword id="KW-0493">Microtubule</keyword>
<keyword id="KW-0498">Mitosis</keyword>
<keyword id="KW-0539">Nucleus</keyword>
<keyword id="KW-1185">Reference proteome</keyword>
<organism>
    <name type="scientific">Macaca fascicularis</name>
    <name type="common">Crab-eating macaque</name>
    <name type="synonym">Cynomolgus monkey</name>
    <dbReference type="NCBI Taxonomy" id="9541"/>
    <lineage>
        <taxon>Eukaryota</taxon>
        <taxon>Metazoa</taxon>
        <taxon>Chordata</taxon>
        <taxon>Craniata</taxon>
        <taxon>Vertebrata</taxon>
        <taxon>Euteleostomi</taxon>
        <taxon>Mammalia</taxon>
        <taxon>Eutheria</taxon>
        <taxon>Euarchontoglires</taxon>
        <taxon>Primates</taxon>
        <taxon>Haplorrhini</taxon>
        <taxon>Catarrhini</taxon>
        <taxon>Cercopithecidae</taxon>
        <taxon>Cercopithecinae</taxon>
        <taxon>Macaca</taxon>
    </lineage>
</organism>
<proteinExistence type="evidence at transcript level"/>
<gene>
    <name type="primary">FSD1</name>
    <name type="ORF">QccE-20429</name>
    <name type="ORF">QflA-12963</name>
</gene>
<evidence type="ECO:0000250" key="1"/>
<evidence type="ECO:0000250" key="2">
    <source>
        <dbReference type="UniProtKB" id="Q7TPM6"/>
    </source>
</evidence>
<evidence type="ECO:0000250" key="3">
    <source>
        <dbReference type="UniProtKB" id="Q9BTV5"/>
    </source>
</evidence>
<evidence type="ECO:0000255" key="4"/>
<evidence type="ECO:0000255" key="5">
    <source>
        <dbReference type="PROSITE-ProRule" id="PRU00316"/>
    </source>
</evidence>
<evidence type="ECO:0000255" key="6">
    <source>
        <dbReference type="PROSITE-ProRule" id="PRU00548"/>
    </source>
</evidence>
<evidence type="ECO:0000255" key="7">
    <source>
        <dbReference type="PROSITE-ProRule" id="PRU00586"/>
    </source>
</evidence>
<evidence type="ECO:0000256" key="8">
    <source>
        <dbReference type="SAM" id="MobiDB-lite"/>
    </source>
</evidence>
<evidence type="ECO:0000303" key="9">
    <source ref="1"/>
</evidence>
<evidence type="ECO:0000305" key="10"/>
<protein>
    <recommendedName>
        <fullName>Fibronectin type III and SPRY domain-containing protein 1</fullName>
    </recommendedName>
</protein>
<sequence length="496" mass="55926">MEEQREALRKIITTLAMKNEEIQSFIYSLKQMLLNVEANSTKVQEDLEAEFQSLFSVLEELKEGMLMKIKQDRASRTYELQNQLAACTRALESSEELLETANQTLQAMDREDFPQAAKQIKDGVTMAPAFRLSLKAKVSDNMSHLMVDFAQERQMLQALKFLPVPSAPVIDLAESLVADNCVTLVWRMPDEDSKIDHYVLEYRRTNFEGPPRLKEDQPWMVIEGIRQTEYTLTGLKFDMKYMNFRVKACNKAVAGEFSEPVTLETPAFMFRLDASTSHQNLRVDDLSVEWDAMGGKVQDIKAREKDGKGRTASPINSPARGTPSPKRMPSGRGGRDRFTAESYTVLGDTLIDGGEHYWEVRYEPDSKAFGVGVAYRSLGRFEQLGKTAASWCLHVNNWLQVSFTAKHANKVKVLDAPVPDCLGVHCDFHQGLLSFYNARTKQVLHTFKTRFTQPLLPAFTVWCGSFQVTTGLQVPSSVRCLQKRGSATSSSNTSLT</sequence>